<organism>
    <name type="scientific">Microcystis aeruginosa (strain NIES-843 / IAM M-2473)</name>
    <dbReference type="NCBI Taxonomy" id="449447"/>
    <lineage>
        <taxon>Bacteria</taxon>
        <taxon>Bacillati</taxon>
        <taxon>Cyanobacteriota</taxon>
        <taxon>Cyanophyceae</taxon>
        <taxon>Oscillatoriophycideae</taxon>
        <taxon>Chroococcales</taxon>
        <taxon>Microcystaceae</taxon>
        <taxon>Microcystis</taxon>
    </lineage>
</organism>
<feature type="chain" id="PRO_1000074709" description="Aspartate--tRNA(Asp/Asn) ligase">
    <location>
        <begin position="1"/>
        <end position="595"/>
    </location>
</feature>
<feature type="region of interest" description="Aspartate" evidence="1">
    <location>
        <begin position="202"/>
        <end position="205"/>
    </location>
</feature>
<feature type="binding site" evidence="1">
    <location>
        <position position="178"/>
    </location>
    <ligand>
        <name>L-aspartate</name>
        <dbReference type="ChEBI" id="CHEBI:29991"/>
    </ligand>
</feature>
<feature type="binding site" evidence="1">
    <location>
        <begin position="224"/>
        <end position="226"/>
    </location>
    <ligand>
        <name>ATP</name>
        <dbReference type="ChEBI" id="CHEBI:30616"/>
    </ligand>
</feature>
<feature type="binding site" evidence="1">
    <location>
        <position position="224"/>
    </location>
    <ligand>
        <name>L-aspartate</name>
        <dbReference type="ChEBI" id="CHEBI:29991"/>
    </ligand>
</feature>
<feature type="binding site" evidence="1">
    <location>
        <position position="233"/>
    </location>
    <ligand>
        <name>ATP</name>
        <dbReference type="ChEBI" id="CHEBI:30616"/>
    </ligand>
</feature>
<feature type="binding site" evidence="1">
    <location>
        <position position="458"/>
    </location>
    <ligand>
        <name>L-aspartate</name>
        <dbReference type="ChEBI" id="CHEBI:29991"/>
    </ligand>
</feature>
<feature type="binding site" evidence="1">
    <location>
        <position position="488"/>
    </location>
    <ligand>
        <name>ATP</name>
        <dbReference type="ChEBI" id="CHEBI:30616"/>
    </ligand>
</feature>
<feature type="binding site" evidence="1">
    <location>
        <position position="495"/>
    </location>
    <ligand>
        <name>L-aspartate</name>
        <dbReference type="ChEBI" id="CHEBI:29991"/>
    </ligand>
</feature>
<feature type="binding site" evidence="1">
    <location>
        <begin position="540"/>
        <end position="543"/>
    </location>
    <ligand>
        <name>ATP</name>
        <dbReference type="ChEBI" id="CHEBI:30616"/>
    </ligand>
</feature>
<feature type="site" description="Important for tRNA non-discrimination" evidence="1">
    <location>
        <position position="30"/>
    </location>
</feature>
<evidence type="ECO:0000255" key="1">
    <source>
        <dbReference type="HAMAP-Rule" id="MF_00044"/>
    </source>
</evidence>
<keyword id="KW-0030">Aminoacyl-tRNA synthetase</keyword>
<keyword id="KW-0067">ATP-binding</keyword>
<keyword id="KW-0963">Cytoplasm</keyword>
<keyword id="KW-0436">Ligase</keyword>
<keyword id="KW-0547">Nucleotide-binding</keyword>
<keyword id="KW-0648">Protein biosynthesis</keyword>
<reference key="1">
    <citation type="journal article" date="2007" name="DNA Res.">
        <title>Complete genomic structure of the bloom-forming toxic cyanobacterium Microcystis aeruginosa NIES-843.</title>
        <authorList>
            <person name="Kaneko T."/>
            <person name="Nakajima N."/>
            <person name="Okamoto S."/>
            <person name="Suzuki I."/>
            <person name="Tanabe Y."/>
            <person name="Tamaoki M."/>
            <person name="Nakamura Y."/>
            <person name="Kasai F."/>
            <person name="Watanabe A."/>
            <person name="Kawashima K."/>
            <person name="Kishida Y."/>
            <person name="Ono A."/>
            <person name="Shimizu Y."/>
            <person name="Takahashi C."/>
            <person name="Minami C."/>
            <person name="Fujishiro T."/>
            <person name="Kohara M."/>
            <person name="Katoh M."/>
            <person name="Nakazaki N."/>
            <person name="Nakayama S."/>
            <person name="Yamada M."/>
            <person name="Tabata S."/>
            <person name="Watanabe M.M."/>
        </authorList>
    </citation>
    <scope>NUCLEOTIDE SEQUENCE [LARGE SCALE GENOMIC DNA]</scope>
    <source>
        <strain>NIES-843 / IAM M-247</strain>
    </source>
</reference>
<protein>
    <recommendedName>
        <fullName evidence="1">Aspartate--tRNA(Asp/Asn) ligase</fullName>
        <ecNumber evidence="1">6.1.1.23</ecNumber>
    </recommendedName>
    <alternativeName>
        <fullName evidence="1">Aspartyl-tRNA synthetase</fullName>
        <shortName evidence="1">AspRS</shortName>
    </alternativeName>
    <alternativeName>
        <fullName evidence="1">Non-discriminating aspartyl-tRNA synthetase</fullName>
        <shortName evidence="1">ND-AspRS</shortName>
    </alternativeName>
</protein>
<proteinExistence type="inferred from homology"/>
<accession>B0JNW9</accession>
<sequence length="595" mass="66811">MRTHYCGDLSAIEIEKSVTLFGWVDRRRDHGGVIFIDLRDRSGIVQIVSDPQRTPASYPIAETVRNEYVLKVTGTVSQRPTESLNPRIATGEIEIYATSIEILNGVTKQLPFVVSSSESESVREDVRLRYRYLDLRRERMSQNLQLRHQVVKEMRRFLEDEQHFIEVETPILTRSTPEGARDYLVPSRVNPGQWYALPQSPQLFKQLLMVSGMDRYYQIARCFRDEDLRADRQPEFTQLDMEMSFLSLPEILALNEALIAHIFKKVKNIDISLPLPRLTYAEAMDRYGIDRPDTRFGLELVNVAEIFADSGFKVFSGAIASGGTVKVLPIPNGNEAISNVRIKPGGDLFKEATDAGAKGIAYIRVREDYDFDTIGAIKDNLTEAQKQALIEKTGAKPGHLLLFGAGDTDTVNKSLSRLRLVLGEQLGLIDPEKINLLWVTDFPMFEYNAEEKRLEALHHPFTAPNPEDLEDLAQARALAYDMIFNGIEIGGGSLRIYQREVQEKVFATIGLSPEEAYNKFGFLLEAFEYGTPPHGGIAYGLDRLVMLLAGEESIRDVIAFPKTQQASCLLTSAPSTVAAKQLKELSVASTYKPPS</sequence>
<dbReference type="EC" id="6.1.1.23" evidence="1"/>
<dbReference type="EMBL" id="AP009552">
    <property type="protein sequence ID" value="BAG03549.1"/>
    <property type="molecule type" value="Genomic_DNA"/>
</dbReference>
<dbReference type="RefSeq" id="WP_012266532.1">
    <property type="nucleotide sequence ID" value="NC_010296.1"/>
</dbReference>
<dbReference type="SMR" id="B0JNW9"/>
<dbReference type="STRING" id="449447.MAE_37270"/>
<dbReference type="PaxDb" id="449447-MAE_37270"/>
<dbReference type="EnsemblBacteria" id="BAG03549">
    <property type="protein sequence ID" value="BAG03549"/>
    <property type="gene ID" value="MAE_37270"/>
</dbReference>
<dbReference type="KEGG" id="mar:MAE_37270"/>
<dbReference type="PATRIC" id="fig|449447.4.peg.3374"/>
<dbReference type="eggNOG" id="COG0173">
    <property type="taxonomic scope" value="Bacteria"/>
</dbReference>
<dbReference type="HOGENOM" id="CLU_014330_3_2_3"/>
<dbReference type="BioCyc" id="MAER449447:MAE_RS16125-MONOMER"/>
<dbReference type="Proteomes" id="UP000001510">
    <property type="component" value="Chromosome"/>
</dbReference>
<dbReference type="GO" id="GO:0005737">
    <property type="term" value="C:cytoplasm"/>
    <property type="evidence" value="ECO:0007669"/>
    <property type="project" value="UniProtKB-SubCell"/>
</dbReference>
<dbReference type="GO" id="GO:0004815">
    <property type="term" value="F:aspartate-tRNA ligase activity"/>
    <property type="evidence" value="ECO:0007669"/>
    <property type="project" value="UniProtKB-UniRule"/>
</dbReference>
<dbReference type="GO" id="GO:0050560">
    <property type="term" value="F:aspartate-tRNA(Asn) ligase activity"/>
    <property type="evidence" value="ECO:0007669"/>
    <property type="project" value="UniProtKB-EC"/>
</dbReference>
<dbReference type="GO" id="GO:0005524">
    <property type="term" value="F:ATP binding"/>
    <property type="evidence" value="ECO:0007669"/>
    <property type="project" value="UniProtKB-UniRule"/>
</dbReference>
<dbReference type="GO" id="GO:0003676">
    <property type="term" value="F:nucleic acid binding"/>
    <property type="evidence" value="ECO:0007669"/>
    <property type="project" value="InterPro"/>
</dbReference>
<dbReference type="GO" id="GO:0006422">
    <property type="term" value="P:aspartyl-tRNA aminoacylation"/>
    <property type="evidence" value="ECO:0007669"/>
    <property type="project" value="UniProtKB-UniRule"/>
</dbReference>
<dbReference type="CDD" id="cd00777">
    <property type="entry name" value="AspRS_core"/>
    <property type="match status" value="1"/>
</dbReference>
<dbReference type="CDD" id="cd04317">
    <property type="entry name" value="EcAspRS_like_N"/>
    <property type="match status" value="1"/>
</dbReference>
<dbReference type="Gene3D" id="3.30.930.10">
    <property type="entry name" value="Bira Bifunctional Protein, Domain 2"/>
    <property type="match status" value="1"/>
</dbReference>
<dbReference type="Gene3D" id="3.30.1360.30">
    <property type="entry name" value="GAD-like domain"/>
    <property type="match status" value="1"/>
</dbReference>
<dbReference type="Gene3D" id="2.40.50.140">
    <property type="entry name" value="Nucleic acid-binding proteins"/>
    <property type="match status" value="1"/>
</dbReference>
<dbReference type="HAMAP" id="MF_00044">
    <property type="entry name" value="Asp_tRNA_synth_type1"/>
    <property type="match status" value="1"/>
</dbReference>
<dbReference type="InterPro" id="IPR004364">
    <property type="entry name" value="Aa-tRNA-synt_II"/>
</dbReference>
<dbReference type="InterPro" id="IPR006195">
    <property type="entry name" value="aa-tRNA-synth_II"/>
</dbReference>
<dbReference type="InterPro" id="IPR045864">
    <property type="entry name" value="aa-tRNA-synth_II/BPL/LPL"/>
</dbReference>
<dbReference type="InterPro" id="IPR004524">
    <property type="entry name" value="Asp-tRNA-ligase_1"/>
</dbReference>
<dbReference type="InterPro" id="IPR047089">
    <property type="entry name" value="Asp-tRNA-ligase_1_N"/>
</dbReference>
<dbReference type="InterPro" id="IPR002312">
    <property type="entry name" value="Asp/Asn-tRNA-synth_IIb"/>
</dbReference>
<dbReference type="InterPro" id="IPR047090">
    <property type="entry name" value="AspRS_core"/>
</dbReference>
<dbReference type="InterPro" id="IPR004115">
    <property type="entry name" value="GAD-like_sf"/>
</dbReference>
<dbReference type="InterPro" id="IPR029351">
    <property type="entry name" value="GAD_dom"/>
</dbReference>
<dbReference type="InterPro" id="IPR012340">
    <property type="entry name" value="NA-bd_OB-fold"/>
</dbReference>
<dbReference type="InterPro" id="IPR004365">
    <property type="entry name" value="NA-bd_OB_tRNA"/>
</dbReference>
<dbReference type="NCBIfam" id="TIGR00459">
    <property type="entry name" value="aspS_bact"/>
    <property type="match status" value="1"/>
</dbReference>
<dbReference type="NCBIfam" id="NF001750">
    <property type="entry name" value="PRK00476.1"/>
    <property type="match status" value="1"/>
</dbReference>
<dbReference type="PANTHER" id="PTHR22594:SF5">
    <property type="entry name" value="ASPARTATE--TRNA LIGASE, MITOCHONDRIAL"/>
    <property type="match status" value="1"/>
</dbReference>
<dbReference type="PANTHER" id="PTHR22594">
    <property type="entry name" value="ASPARTYL/LYSYL-TRNA SYNTHETASE"/>
    <property type="match status" value="1"/>
</dbReference>
<dbReference type="Pfam" id="PF02938">
    <property type="entry name" value="GAD"/>
    <property type="match status" value="1"/>
</dbReference>
<dbReference type="Pfam" id="PF00152">
    <property type="entry name" value="tRNA-synt_2"/>
    <property type="match status" value="1"/>
</dbReference>
<dbReference type="Pfam" id="PF01336">
    <property type="entry name" value="tRNA_anti-codon"/>
    <property type="match status" value="1"/>
</dbReference>
<dbReference type="PRINTS" id="PR01042">
    <property type="entry name" value="TRNASYNTHASP"/>
</dbReference>
<dbReference type="SUPFAM" id="SSF55681">
    <property type="entry name" value="Class II aaRS and biotin synthetases"/>
    <property type="match status" value="1"/>
</dbReference>
<dbReference type="SUPFAM" id="SSF55261">
    <property type="entry name" value="GAD domain-like"/>
    <property type="match status" value="1"/>
</dbReference>
<dbReference type="SUPFAM" id="SSF50249">
    <property type="entry name" value="Nucleic acid-binding proteins"/>
    <property type="match status" value="1"/>
</dbReference>
<dbReference type="PROSITE" id="PS50862">
    <property type="entry name" value="AA_TRNA_LIGASE_II"/>
    <property type="match status" value="1"/>
</dbReference>
<gene>
    <name evidence="1" type="primary">aspS</name>
    <name type="ordered locus">MAE_37270</name>
</gene>
<name>SYDND_MICAN</name>
<comment type="function">
    <text evidence="1">Aspartyl-tRNA synthetase with relaxed tRNA specificity since it is able to aspartylate not only its cognate tRNA(Asp) but also tRNA(Asn). Reaction proceeds in two steps: L-aspartate is first activated by ATP to form Asp-AMP and then transferred to the acceptor end of tRNA(Asp/Asn).</text>
</comment>
<comment type="catalytic activity">
    <reaction evidence="1">
        <text>tRNA(Asx) + L-aspartate + ATP = L-aspartyl-tRNA(Asx) + AMP + diphosphate</text>
        <dbReference type="Rhea" id="RHEA:18349"/>
        <dbReference type="Rhea" id="RHEA-COMP:9710"/>
        <dbReference type="Rhea" id="RHEA-COMP:9711"/>
        <dbReference type="ChEBI" id="CHEBI:29991"/>
        <dbReference type="ChEBI" id="CHEBI:30616"/>
        <dbReference type="ChEBI" id="CHEBI:33019"/>
        <dbReference type="ChEBI" id="CHEBI:78442"/>
        <dbReference type="ChEBI" id="CHEBI:78516"/>
        <dbReference type="ChEBI" id="CHEBI:456215"/>
        <dbReference type="EC" id="6.1.1.23"/>
    </reaction>
</comment>
<comment type="subunit">
    <text evidence="1">Homodimer.</text>
</comment>
<comment type="subcellular location">
    <subcellularLocation>
        <location evidence="1">Cytoplasm</location>
    </subcellularLocation>
</comment>
<comment type="similarity">
    <text evidence="1">Belongs to the class-II aminoacyl-tRNA synthetase family. Type 1 subfamily.</text>
</comment>